<feature type="chain" id="PRO_0000375686" description="Succinyl-diaminopimelate desuccinylase">
    <location>
        <begin position="1"/>
        <end position="380"/>
    </location>
</feature>
<feature type="active site" evidence="1">
    <location>
        <position position="71"/>
    </location>
</feature>
<feature type="active site" description="Proton acceptor" evidence="1">
    <location>
        <position position="135"/>
    </location>
</feature>
<feature type="binding site" evidence="1">
    <location>
        <position position="69"/>
    </location>
    <ligand>
        <name>Zn(2+)</name>
        <dbReference type="ChEBI" id="CHEBI:29105"/>
        <label>1</label>
    </ligand>
</feature>
<feature type="binding site" evidence="1">
    <location>
        <position position="102"/>
    </location>
    <ligand>
        <name>Zn(2+)</name>
        <dbReference type="ChEBI" id="CHEBI:29105"/>
        <label>1</label>
    </ligand>
</feature>
<feature type="binding site" evidence="1">
    <location>
        <position position="102"/>
    </location>
    <ligand>
        <name>Zn(2+)</name>
        <dbReference type="ChEBI" id="CHEBI:29105"/>
        <label>2</label>
    </ligand>
</feature>
<feature type="binding site" evidence="1">
    <location>
        <position position="136"/>
    </location>
    <ligand>
        <name>Zn(2+)</name>
        <dbReference type="ChEBI" id="CHEBI:29105"/>
        <label>2</label>
    </ligand>
</feature>
<feature type="binding site" evidence="1">
    <location>
        <position position="164"/>
    </location>
    <ligand>
        <name>Zn(2+)</name>
        <dbReference type="ChEBI" id="CHEBI:29105"/>
        <label>1</label>
    </ligand>
</feature>
<feature type="binding site" evidence="1">
    <location>
        <position position="353"/>
    </location>
    <ligand>
        <name>Zn(2+)</name>
        <dbReference type="ChEBI" id="CHEBI:29105"/>
        <label>2</label>
    </ligand>
</feature>
<sequence length="380" mass="40320">MPIDPVALTADLVRCPSVTPEEGGALDLIERILSGAGFDCTRVDRNGVPNLFARWGRKGANRTFGFNGHTDVVPVGDAAAWTRDPFGGEIADGWLWGRGATDMKSGVAAFVAAAVDFVQETPPDGAVVLTITGDEEGDATDGTVALLDWMAAEGEAMSVCLVGEPTCPERLGEMMKIGRRGSMTAFFTARGVQGHSAYPHRAKNPVAALARLIDRLSSHDLDQGTEHFDASTLAVTTFDTGNPATNVIPALCRATVNIRFNDAHSGASLASWLEEEAARVTAETGVEIALSAKISGESFLTPPGELSELVARAVEAETGLRPEPSTSGGTSDARFVRAHCPVVEFGLVGKTMHQVDERVEVAQIEPLKAIYLRILKDYFA</sequence>
<accession>A3PNH5</accession>
<gene>
    <name evidence="1" type="primary">dapE</name>
    <name type="ordered locus">Rsph17029_2789</name>
</gene>
<dbReference type="EC" id="3.5.1.18" evidence="1"/>
<dbReference type="EMBL" id="CP000577">
    <property type="protein sequence ID" value="ABN77891.1"/>
    <property type="molecule type" value="Genomic_DNA"/>
</dbReference>
<dbReference type="RefSeq" id="WP_011841890.1">
    <property type="nucleotide sequence ID" value="NC_009049.1"/>
</dbReference>
<dbReference type="SMR" id="A3PNH5"/>
<dbReference type="KEGG" id="rsh:Rsph17029_2789"/>
<dbReference type="HOGENOM" id="CLU_021802_4_0_5"/>
<dbReference type="UniPathway" id="UPA00034">
    <property type="reaction ID" value="UER00021"/>
</dbReference>
<dbReference type="GO" id="GO:0008777">
    <property type="term" value="F:acetylornithine deacetylase activity"/>
    <property type="evidence" value="ECO:0007669"/>
    <property type="project" value="TreeGrafter"/>
</dbReference>
<dbReference type="GO" id="GO:0050897">
    <property type="term" value="F:cobalt ion binding"/>
    <property type="evidence" value="ECO:0007669"/>
    <property type="project" value="UniProtKB-UniRule"/>
</dbReference>
<dbReference type="GO" id="GO:0009014">
    <property type="term" value="F:succinyl-diaminopimelate desuccinylase activity"/>
    <property type="evidence" value="ECO:0007669"/>
    <property type="project" value="UniProtKB-UniRule"/>
</dbReference>
<dbReference type="GO" id="GO:0008270">
    <property type="term" value="F:zinc ion binding"/>
    <property type="evidence" value="ECO:0007669"/>
    <property type="project" value="UniProtKB-UniRule"/>
</dbReference>
<dbReference type="GO" id="GO:0019877">
    <property type="term" value="P:diaminopimelate biosynthetic process"/>
    <property type="evidence" value="ECO:0007669"/>
    <property type="project" value="UniProtKB-UniRule"/>
</dbReference>
<dbReference type="GO" id="GO:0006526">
    <property type="term" value="P:L-arginine biosynthetic process"/>
    <property type="evidence" value="ECO:0007669"/>
    <property type="project" value="TreeGrafter"/>
</dbReference>
<dbReference type="GO" id="GO:0009089">
    <property type="term" value="P:lysine biosynthetic process via diaminopimelate"/>
    <property type="evidence" value="ECO:0007669"/>
    <property type="project" value="UniProtKB-UniRule"/>
</dbReference>
<dbReference type="CDD" id="cd03891">
    <property type="entry name" value="M20_DapE_proteobac"/>
    <property type="match status" value="1"/>
</dbReference>
<dbReference type="Gene3D" id="3.30.70.360">
    <property type="match status" value="1"/>
</dbReference>
<dbReference type="Gene3D" id="3.40.630.10">
    <property type="entry name" value="Zn peptidases"/>
    <property type="match status" value="1"/>
</dbReference>
<dbReference type="HAMAP" id="MF_01690">
    <property type="entry name" value="DapE"/>
    <property type="match status" value="1"/>
</dbReference>
<dbReference type="InterPro" id="IPR001261">
    <property type="entry name" value="ArgE/DapE_CS"/>
</dbReference>
<dbReference type="InterPro" id="IPR036264">
    <property type="entry name" value="Bact_exopeptidase_dim_dom"/>
</dbReference>
<dbReference type="InterPro" id="IPR005941">
    <property type="entry name" value="DapE_proteobac"/>
</dbReference>
<dbReference type="InterPro" id="IPR002933">
    <property type="entry name" value="Peptidase_M20"/>
</dbReference>
<dbReference type="InterPro" id="IPR011650">
    <property type="entry name" value="Peptidase_M20_dimer"/>
</dbReference>
<dbReference type="InterPro" id="IPR050072">
    <property type="entry name" value="Peptidase_M20A"/>
</dbReference>
<dbReference type="NCBIfam" id="TIGR01246">
    <property type="entry name" value="dapE_proteo"/>
    <property type="match status" value="1"/>
</dbReference>
<dbReference type="NCBIfam" id="NF009557">
    <property type="entry name" value="PRK13009.1"/>
    <property type="match status" value="1"/>
</dbReference>
<dbReference type="PANTHER" id="PTHR43808">
    <property type="entry name" value="ACETYLORNITHINE DEACETYLASE"/>
    <property type="match status" value="1"/>
</dbReference>
<dbReference type="PANTHER" id="PTHR43808:SF31">
    <property type="entry name" value="N-ACETYL-L-CITRULLINE DEACETYLASE"/>
    <property type="match status" value="1"/>
</dbReference>
<dbReference type="Pfam" id="PF07687">
    <property type="entry name" value="M20_dimer"/>
    <property type="match status" value="1"/>
</dbReference>
<dbReference type="Pfam" id="PF01546">
    <property type="entry name" value="Peptidase_M20"/>
    <property type="match status" value="1"/>
</dbReference>
<dbReference type="SUPFAM" id="SSF55031">
    <property type="entry name" value="Bacterial exopeptidase dimerisation domain"/>
    <property type="match status" value="1"/>
</dbReference>
<dbReference type="SUPFAM" id="SSF53187">
    <property type="entry name" value="Zn-dependent exopeptidases"/>
    <property type="match status" value="1"/>
</dbReference>
<dbReference type="PROSITE" id="PS00759">
    <property type="entry name" value="ARGE_DAPE_CPG2_2"/>
    <property type="match status" value="1"/>
</dbReference>
<evidence type="ECO:0000255" key="1">
    <source>
        <dbReference type="HAMAP-Rule" id="MF_01690"/>
    </source>
</evidence>
<comment type="function">
    <text evidence="1">Catalyzes the hydrolysis of N-succinyl-L,L-diaminopimelic acid (SDAP), forming succinate and LL-2,6-diaminopimelate (DAP), an intermediate involved in the bacterial biosynthesis of lysine and meso-diaminopimelic acid, an essential component of bacterial cell walls.</text>
</comment>
<comment type="catalytic activity">
    <reaction evidence="1">
        <text>N-succinyl-(2S,6S)-2,6-diaminopimelate + H2O = (2S,6S)-2,6-diaminopimelate + succinate</text>
        <dbReference type="Rhea" id="RHEA:22608"/>
        <dbReference type="ChEBI" id="CHEBI:15377"/>
        <dbReference type="ChEBI" id="CHEBI:30031"/>
        <dbReference type="ChEBI" id="CHEBI:57609"/>
        <dbReference type="ChEBI" id="CHEBI:58087"/>
        <dbReference type="EC" id="3.5.1.18"/>
    </reaction>
</comment>
<comment type="cofactor">
    <cofactor evidence="1">
        <name>Zn(2+)</name>
        <dbReference type="ChEBI" id="CHEBI:29105"/>
    </cofactor>
    <cofactor evidence="1">
        <name>Co(2+)</name>
        <dbReference type="ChEBI" id="CHEBI:48828"/>
    </cofactor>
    <text evidence="1">Binds 2 Zn(2+) or Co(2+) ions per subunit.</text>
</comment>
<comment type="pathway">
    <text evidence="1">Amino-acid biosynthesis; L-lysine biosynthesis via DAP pathway; LL-2,6-diaminopimelate from (S)-tetrahydrodipicolinate (succinylase route): step 3/3.</text>
</comment>
<comment type="subunit">
    <text evidence="1">Homodimer.</text>
</comment>
<comment type="similarity">
    <text evidence="1">Belongs to the peptidase M20A family. DapE subfamily.</text>
</comment>
<proteinExistence type="inferred from homology"/>
<name>DAPE_CERS1</name>
<organism>
    <name type="scientific">Cereibacter sphaeroides (strain ATCC 17029 / ATH 2.4.9)</name>
    <name type="common">Rhodobacter sphaeroides</name>
    <dbReference type="NCBI Taxonomy" id="349101"/>
    <lineage>
        <taxon>Bacteria</taxon>
        <taxon>Pseudomonadati</taxon>
        <taxon>Pseudomonadota</taxon>
        <taxon>Alphaproteobacteria</taxon>
        <taxon>Rhodobacterales</taxon>
        <taxon>Paracoccaceae</taxon>
        <taxon>Cereibacter</taxon>
    </lineage>
</organism>
<keyword id="KW-0028">Amino-acid biosynthesis</keyword>
<keyword id="KW-0170">Cobalt</keyword>
<keyword id="KW-0220">Diaminopimelate biosynthesis</keyword>
<keyword id="KW-0378">Hydrolase</keyword>
<keyword id="KW-0457">Lysine biosynthesis</keyword>
<keyword id="KW-0479">Metal-binding</keyword>
<keyword id="KW-0862">Zinc</keyword>
<protein>
    <recommendedName>
        <fullName evidence="1">Succinyl-diaminopimelate desuccinylase</fullName>
        <shortName evidence="1">SDAP desuccinylase</shortName>
        <ecNumber evidence="1">3.5.1.18</ecNumber>
    </recommendedName>
    <alternativeName>
        <fullName evidence="1">N-succinyl-LL-2,6-diaminoheptanedioate amidohydrolase</fullName>
    </alternativeName>
</protein>
<reference key="1">
    <citation type="submission" date="2007-02" db="EMBL/GenBank/DDBJ databases">
        <title>Complete sequence of chromosome 1 of Rhodobacter sphaeroides ATCC 17029.</title>
        <authorList>
            <person name="Copeland A."/>
            <person name="Lucas S."/>
            <person name="Lapidus A."/>
            <person name="Barry K."/>
            <person name="Detter J.C."/>
            <person name="Glavina del Rio T."/>
            <person name="Hammon N."/>
            <person name="Israni S."/>
            <person name="Dalin E."/>
            <person name="Tice H."/>
            <person name="Pitluck S."/>
            <person name="Kiss H."/>
            <person name="Brettin T."/>
            <person name="Bruce D."/>
            <person name="Han C."/>
            <person name="Tapia R."/>
            <person name="Gilna P."/>
            <person name="Schmutz J."/>
            <person name="Larimer F."/>
            <person name="Land M."/>
            <person name="Hauser L."/>
            <person name="Kyrpides N."/>
            <person name="Mikhailova N."/>
            <person name="Richardson P."/>
            <person name="Mackenzie C."/>
            <person name="Choudhary M."/>
            <person name="Donohue T.J."/>
            <person name="Kaplan S."/>
        </authorList>
    </citation>
    <scope>NUCLEOTIDE SEQUENCE [LARGE SCALE GENOMIC DNA]</scope>
    <source>
        <strain>ATCC 17029 / ATH 2.4.9</strain>
    </source>
</reference>